<reference key="1">
    <citation type="journal article" date="2002" name="Proc. Natl. Acad. Sci. U.S.A.">
        <title>Extensive mosaic structure revealed by the complete genome sequence of uropathogenic Escherichia coli.</title>
        <authorList>
            <person name="Welch R.A."/>
            <person name="Burland V."/>
            <person name="Plunkett G. III"/>
            <person name="Redford P."/>
            <person name="Roesch P."/>
            <person name="Rasko D."/>
            <person name="Buckles E.L."/>
            <person name="Liou S.-R."/>
            <person name="Boutin A."/>
            <person name="Hackett J."/>
            <person name="Stroud D."/>
            <person name="Mayhew G.F."/>
            <person name="Rose D.J."/>
            <person name="Zhou S."/>
            <person name="Schwartz D.C."/>
            <person name="Perna N.T."/>
            <person name="Mobley H.L.T."/>
            <person name="Donnenberg M.S."/>
            <person name="Blattner F.R."/>
        </authorList>
    </citation>
    <scope>NUCLEOTIDE SEQUENCE [LARGE SCALE GENOMIC DNA]</scope>
    <source>
        <strain>CFT073 / ATCC 700928 / UPEC</strain>
    </source>
</reference>
<keyword id="KW-0028">Amino-acid biosynthesis</keyword>
<keyword id="KW-0067">ATP-binding</keyword>
<keyword id="KW-0963">Cytoplasm</keyword>
<keyword id="KW-0418">Kinase</keyword>
<keyword id="KW-0547">Nucleotide-binding</keyword>
<keyword id="KW-0641">Proline biosynthesis</keyword>
<keyword id="KW-1185">Reference proteome</keyword>
<keyword id="KW-0808">Transferase</keyword>
<gene>
    <name evidence="1" type="primary">proB</name>
    <name type="ordered locus">c0389</name>
</gene>
<accession>P0A7B6</accession>
<accession>P07005</accession>
<accession>P78293</accession>
<name>PROB_ECOL6</name>
<comment type="function">
    <text evidence="1">Catalyzes the transfer of a phosphate group to glutamate to form L-glutamate 5-phosphate.</text>
</comment>
<comment type="catalytic activity">
    <reaction evidence="1">
        <text>L-glutamate + ATP = L-glutamyl 5-phosphate + ADP</text>
        <dbReference type="Rhea" id="RHEA:14877"/>
        <dbReference type="ChEBI" id="CHEBI:29985"/>
        <dbReference type="ChEBI" id="CHEBI:30616"/>
        <dbReference type="ChEBI" id="CHEBI:58274"/>
        <dbReference type="ChEBI" id="CHEBI:456216"/>
        <dbReference type="EC" id="2.7.2.11"/>
    </reaction>
</comment>
<comment type="pathway">
    <text evidence="1">Amino-acid biosynthesis; L-proline biosynthesis; L-glutamate 5-semialdehyde from L-glutamate: step 1/2.</text>
</comment>
<comment type="subcellular location">
    <subcellularLocation>
        <location evidence="1">Cytoplasm</location>
    </subcellularLocation>
</comment>
<comment type="similarity">
    <text evidence="1">Belongs to the glutamate 5-kinase family.</text>
</comment>
<comment type="sequence caution" evidence="2">
    <conflict type="erroneous initiation">
        <sequence resource="EMBL-CDS" id="AAN78870"/>
    </conflict>
</comment>
<dbReference type="EC" id="2.7.2.11" evidence="1"/>
<dbReference type="EMBL" id="AE014075">
    <property type="protein sequence ID" value="AAN78870.1"/>
    <property type="status" value="ALT_INIT"/>
    <property type="molecule type" value="Genomic_DNA"/>
</dbReference>
<dbReference type="RefSeq" id="WP_001285288.1">
    <property type="nucleotide sequence ID" value="NZ_CP051263.1"/>
</dbReference>
<dbReference type="SMR" id="P0A7B6"/>
<dbReference type="STRING" id="199310.c0389"/>
<dbReference type="GeneID" id="93777151"/>
<dbReference type="KEGG" id="ecc:c0389"/>
<dbReference type="eggNOG" id="COG0263">
    <property type="taxonomic scope" value="Bacteria"/>
</dbReference>
<dbReference type="HOGENOM" id="CLU_025400_2_0_6"/>
<dbReference type="UniPathway" id="UPA00098">
    <property type="reaction ID" value="UER00359"/>
</dbReference>
<dbReference type="Proteomes" id="UP000001410">
    <property type="component" value="Chromosome"/>
</dbReference>
<dbReference type="GO" id="GO:0005829">
    <property type="term" value="C:cytosol"/>
    <property type="evidence" value="ECO:0007669"/>
    <property type="project" value="TreeGrafter"/>
</dbReference>
<dbReference type="GO" id="GO:0005524">
    <property type="term" value="F:ATP binding"/>
    <property type="evidence" value="ECO:0007669"/>
    <property type="project" value="UniProtKB-KW"/>
</dbReference>
<dbReference type="GO" id="GO:0004349">
    <property type="term" value="F:glutamate 5-kinase activity"/>
    <property type="evidence" value="ECO:0007669"/>
    <property type="project" value="UniProtKB-UniRule"/>
</dbReference>
<dbReference type="GO" id="GO:0003723">
    <property type="term" value="F:RNA binding"/>
    <property type="evidence" value="ECO:0007669"/>
    <property type="project" value="InterPro"/>
</dbReference>
<dbReference type="GO" id="GO:0055129">
    <property type="term" value="P:L-proline biosynthetic process"/>
    <property type="evidence" value="ECO:0007669"/>
    <property type="project" value="UniProtKB-UniRule"/>
</dbReference>
<dbReference type="CDD" id="cd04242">
    <property type="entry name" value="AAK_G5K_ProB"/>
    <property type="match status" value="1"/>
</dbReference>
<dbReference type="CDD" id="cd21157">
    <property type="entry name" value="PUA_G5K"/>
    <property type="match status" value="1"/>
</dbReference>
<dbReference type="FunFam" id="2.30.130.10:FF:000003">
    <property type="entry name" value="Glutamate 5-kinase"/>
    <property type="match status" value="1"/>
</dbReference>
<dbReference type="FunFam" id="3.40.1160.10:FF:000006">
    <property type="entry name" value="Glutamate 5-kinase"/>
    <property type="match status" value="1"/>
</dbReference>
<dbReference type="Gene3D" id="3.40.1160.10">
    <property type="entry name" value="Acetylglutamate kinase-like"/>
    <property type="match status" value="2"/>
</dbReference>
<dbReference type="Gene3D" id="2.30.130.10">
    <property type="entry name" value="PUA domain"/>
    <property type="match status" value="1"/>
</dbReference>
<dbReference type="HAMAP" id="MF_00456">
    <property type="entry name" value="ProB"/>
    <property type="match status" value="1"/>
</dbReference>
<dbReference type="InterPro" id="IPR036393">
    <property type="entry name" value="AceGlu_kinase-like_sf"/>
</dbReference>
<dbReference type="InterPro" id="IPR001048">
    <property type="entry name" value="Asp/Glu/Uridylate_kinase"/>
</dbReference>
<dbReference type="InterPro" id="IPR041739">
    <property type="entry name" value="G5K_ProB"/>
</dbReference>
<dbReference type="InterPro" id="IPR001057">
    <property type="entry name" value="Glu/AcGlu_kinase"/>
</dbReference>
<dbReference type="InterPro" id="IPR011529">
    <property type="entry name" value="Glu_5kinase"/>
</dbReference>
<dbReference type="InterPro" id="IPR005715">
    <property type="entry name" value="Glu_5kinase/COase_Synthase"/>
</dbReference>
<dbReference type="InterPro" id="IPR019797">
    <property type="entry name" value="Glutamate_5-kinase_CS"/>
</dbReference>
<dbReference type="InterPro" id="IPR002478">
    <property type="entry name" value="PUA"/>
</dbReference>
<dbReference type="InterPro" id="IPR015947">
    <property type="entry name" value="PUA-like_sf"/>
</dbReference>
<dbReference type="InterPro" id="IPR036974">
    <property type="entry name" value="PUA_sf"/>
</dbReference>
<dbReference type="NCBIfam" id="TIGR01027">
    <property type="entry name" value="proB"/>
    <property type="match status" value="1"/>
</dbReference>
<dbReference type="PANTHER" id="PTHR43654">
    <property type="entry name" value="GLUTAMATE 5-KINASE"/>
    <property type="match status" value="1"/>
</dbReference>
<dbReference type="PANTHER" id="PTHR43654:SF1">
    <property type="entry name" value="ISOPENTENYL PHOSPHATE KINASE"/>
    <property type="match status" value="1"/>
</dbReference>
<dbReference type="Pfam" id="PF00696">
    <property type="entry name" value="AA_kinase"/>
    <property type="match status" value="1"/>
</dbReference>
<dbReference type="Pfam" id="PF01472">
    <property type="entry name" value="PUA"/>
    <property type="match status" value="1"/>
</dbReference>
<dbReference type="PIRSF" id="PIRSF000729">
    <property type="entry name" value="GK"/>
    <property type="match status" value="1"/>
</dbReference>
<dbReference type="PRINTS" id="PR00474">
    <property type="entry name" value="GLU5KINASE"/>
</dbReference>
<dbReference type="SMART" id="SM00359">
    <property type="entry name" value="PUA"/>
    <property type="match status" value="1"/>
</dbReference>
<dbReference type="SUPFAM" id="SSF53633">
    <property type="entry name" value="Carbamate kinase-like"/>
    <property type="match status" value="1"/>
</dbReference>
<dbReference type="SUPFAM" id="SSF88697">
    <property type="entry name" value="PUA domain-like"/>
    <property type="match status" value="1"/>
</dbReference>
<dbReference type="PROSITE" id="PS00902">
    <property type="entry name" value="GLUTAMATE_5_KINASE"/>
    <property type="match status" value="1"/>
</dbReference>
<dbReference type="PROSITE" id="PS50890">
    <property type="entry name" value="PUA"/>
    <property type="match status" value="1"/>
</dbReference>
<evidence type="ECO:0000255" key="1">
    <source>
        <dbReference type="HAMAP-Rule" id="MF_00456"/>
    </source>
</evidence>
<evidence type="ECO:0000305" key="2"/>
<sequence length="367" mass="39057">MSDSQTLVVKLGTSVLTGGSRRLNRAHIVELVRQCAQLHAAGHRIVIVTSGAIAAGREHLGYPELPATIASKQLLAAVGQSRLIQLWEQLFSIYGIHVGQMLLTRADMEDRERFLNARDTLRALLDNNIVPVINENDAVATAEIKVGDNDNLSALAAILAGADKLLLLTDQKGLYTADPRSNPQAELIKDVYGIDDALRAIAGDSVSGLGTGGMSTKLQAADVACRAGIDTIIAAGSKPGVIGDVMEGISVGTLFHAQATPLENRKRWIFGAPPAGEITVDEGATAAILERGSSLLPKGIKSVTGNFSRGEVIRICNLEGRDIAHGVSRYNSDALRRIAGHHSQEIDAILGYEYGPVAVHRDDMITR</sequence>
<proteinExistence type="inferred from homology"/>
<feature type="chain" id="PRO_0000109671" description="Glutamate 5-kinase">
    <location>
        <begin position="1"/>
        <end position="367"/>
    </location>
</feature>
<feature type="domain" description="PUA" evidence="1">
    <location>
        <begin position="275"/>
        <end position="353"/>
    </location>
</feature>
<feature type="binding site" evidence="1">
    <location>
        <position position="10"/>
    </location>
    <ligand>
        <name>ATP</name>
        <dbReference type="ChEBI" id="CHEBI:30616"/>
    </ligand>
</feature>
<feature type="binding site" evidence="1">
    <location>
        <position position="50"/>
    </location>
    <ligand>
        <name>substrate</name>
    </ligand>
</feature>
<feature type="binding site" evidence="1">
    <location>
        <position position="137"/>
    </location>
    <ligand>
        <name>substrate</name>
    </ligand>
</feature>
<feature type="binding site" evidence="1">
    <location>
        <position position="149"/>
    </location>
    <ligand>
        <name>substrate</name>
    </ligand>
</feature>
<feature type="binding site" evidence="1">
    <location>
        <begin position="169"/>
        <end position="170"/>
    </location>
    <ligand>
        <name>ATP</name>
        <dbReference type="ChEBI" id="CHEBI:30616"/>
    </ligand>
</feature>
<feature type="binding site" evidence="1">
    <location>
        <begin position="211"/>
        <end position="217"/>
    </location>
    <ligand>
        <name>ATP</name>
        <dbReference type="ChEBI" id="CHEBI:30616"/>
    </ligand>
</feature>
<protein>
    <recommendedName>
        <fullName evidence="1">Glutamate 5-kinase</fullName>
        <ecNumber evidence="1">2.7.2.11</ecNumber>
    </recommendedName>
    <alternativeName>
        <fullName evidence="1">Gamma-glutamyl kinase</fullName>
        <shortName evidence="1">GK</shortName>
    </alternativeName>
</protein>
<organism>
    <name type="scientific">Escherichia coli O6:H1 (strain CFT073 / ATCC 700928 / UPEC)</name>
    <dbReference type="NCBI Taxonomy" id="199310"/>
    <lineage>
        <taxon>Bacteria</taxon>
        <taxon>Pseudomonadati</taxon>
        <taxon>Pseudomonadota</taxon>
        <taxon>Gammaproteobacteria</taxon>
        <taxon>Enterobacterales</taxon>
        <taxon>Enterobacteriaceae</taxon>
        <taxon>Escherichia</taxon>
    </lineage>
</organism>